<feature type="initiator methionine" description="Removed" evidence="1">
    <location>
        <position position="1"/>
    </location>
</feature>
<feature type="chain" id="PRO_0000219527" description="Nitrogenase-stabilizing/protective protein NifW">
    <location>
        <begin position="2"/>
        <end position="114"/>
    </location>
</feature>
<accession>P23123</accession>
<keyword id="KW-0535">Nitrogen fixation</keyword>
<sequence>MTVQPFSPDSDLTLDEAMDELVSAEDFLEFFGVPFDQTVVHVNRLHIMQRYHDYLTKAGDLDEHDDQARYAVVPAAARAYLDFVESDALTEKVFKVFRMHEPQKTFVSIDQLLS</sequence>
<reference key="1">
    <citation type="journal article" date="1991" name="J. Bacteriol.">
        <title>Nucleotide sequence and genetic analysis of the Azotobacter chroococcum nifUSVWZM gene cluster, including a new gene (nifP) which encodes a serine acetyltransferase.</title>
        <authorList>
            <person name="Evans D.J."/>
            <person name="Jones R."/>
            <person name="Woodley P.R."/>
            <person name="Wilborn J.R."/>
            <person name="Robson R.L."/>
        </authorList>
    </citation>
    <scope>NUCLEOTIDE SEQUENCE [GENOMIC DNA]</scope>
</reference>
<dbReference type="EMBL" id="M60090">
    <property type="protein sequence ID" value="AAA22164.1"/>
    <property type="molecule type" value="Genomic_DNA"/>
</dbReference>
<dbReference type="PIR" id="F43706">
    <property type="entry name" value="F43706"/>
</dbReference>
<dbReference type="SMR" id="P23123"/>
<dbReference type="GO" id="GO:0009399">
    <property type="term" value="P:nitrogen fixation"/>
    <property type="evidence" value="ECO:0007669"/>
    <property type="project" value="UniProtKB-UniRule"/>
</dbReference>
<dbReference type="HAMAP" id="MF_00529">
    <property type="entry name" value="NifW"/>
    <property type="match status" value="1"/>
</dbReference>
<dbReference type="InterPro" id="IPR004893">
    <property type="entry name" value="NifW"/>
</dbReference>
<dbReference type="Pfam" id="PF03206">
    <property type="entry name" value="NifW"/>
    <property type="match status" value="1"/>
</dbReference>
<dbReference type="PIRSF" id="PIRSF005790">
    <property type="entry name" value="NifW"/>
    <property type="match status" value="1"/>
</dbReference>
<name>NIFW_AZOCH</name>
<proteinExistence type="inferred from homology"/>
<organism>
    <name type="scientific">Azotobacter chroococcum mcd 1</name>
    <dbReference type="NCBI Taxonomy" id="355"/>
    <lineage>
        <taxon>Bacteria</taxon>
        <taxon>Pseudomonadati</taxon>
        <taxon>Pseudomonadota</taxon>
        <taxon>Gammaproteobacteria</taxon>
        <taxon>Pseudomonadales</taxon>
        <taxon>Pseudomonadaceae</taxon>
        <taxon>Azotobacter</taxon>
    </lineage>
</organism>
<protein>
    <recommendedName>
        <fullName>Nitrogenase-stabilizing/protective protein NifW</fullName>
    </recommendedName>
</protein>
<gene>
    <name type="primary">nifW</name>
</gene>
<evidence type="ECO:0000250" key="1"/>
<evidence type="ECO:0000305" key="2"/>
<comment type="function">
    <text evidence="1">May protect the nitrogenase Fe-Mo protein from oxidative damage.</text>
</comment>
<comment type="subunit">
    <text evidence="1">Homotrimer; associates with NifD.</text>
</comment>
<comment type="similarity">
    <text evidence="2">Belongs to the NifW family.</text>
</comment>